<keyword id="KW-0143">Chaperone</keyword>
<keyword id="KW-0963">Cytoplasm</keyword>
<keyword id="KW-0690">Ribosome biogenesis</keyword>
<keyword id="KW-0698">rRNA processing</keyword>
<name>RIMM_SINMW</name>
<evidence type="ECO:0000255" key="1">
    <source>
        <dbReference type="HAMAP-Rule" id="MF_00014"/>
    </source>
</evidence>
<evidence type="ECO:0000305" key="2"/>
<feature type="chain" id="PRO_0000351796" description="Ribosome maturation factor RimM">
    <location>
        <begin position="1"/>
        <end position="187"/>
    </location>
</feature>
<feature type="domain" description="PRC barrel" evidence="1">
    <location>
        <begin position="96"/>
        <end position="169"/>
    </location>
</feature>
<dbReference type="EMBL" id="CP000738">
    <property type="protein sequence ID" value="ABR61924.1"/>
    <property type="status" value="ALT_INIT"/>
    <property type="molecule type" value="Genomic_DNA"/>
</dbReference>
<dbReference type="RefSeq" id="WP_024310897.1">
    <property type="nucleotide sequence ID" value="NC_009636.1"/>
</dbReference>
<dbReference type="RefSeq" id="YP_001328759.1">
    <property type="nucleotide sequence ID" value="NC_009636.1"/>
</dbReference>
<dbReference type="SMR" id="A6UE44"/>
<dbReference type="STRING" id="366394.Smed_3098"/>
<dbReference type="GeneID" id="61610683"/>
<dbReference type="KEGG" id="smd:Smed_3098"/>
<dbReference type="PATRIC" id="fig|366394.8.peg.6329"/>
<dbReference type="eggNOG" id="COG0806">
    <property type="taxonomic scope" value="Bacteria"/>
</dbReference>
<dbReference type="HOGENOM" id="CLU_077636_0_1_5"/>
<dbReference type="OrthoDB" id="9788191at2"/>
<dbReference type="Proteomes" id="UP000001108">
    <property type="component" value="Chromosome"/>
</dbReference>
<dbReference type="GO" id="GO:0005737">
    <property type="term" value="C:cytoplasm"/>
    <property type="evidence" value="ECO:0007669"/>
    <property type="project" value="UniProtKB-SubCell"/>
</dbReference>
<dbReference type="GO" id="GO:0005840">
    <property type="term" value="C:ribosome"/>
    <property type="evidence" value="ECO:0007669"/>
    <property type="project" value="InterPro"/>
</dbReference>
<dbReference type="GO" id="GO:0043022">
    <property type="term" value="F:ribosome binding"/>
    <property type="evidence" value="ECO:0007669"/>
    <property type="project" value="InterPro"/>
</dbReference>
<dbReference type="GO" id="GO:0042274">
    <property type="term" value="P:ribosomal small subunit biogenesis"/>
    <property type="evidence" value="ECO:0007669"/>
    <property type="project" value="UniProtKB-UniRule"/>
</dbReference>
<dbReference type="GO" id="GO:0006364">
    <property type="term" value="P:rRNA processing"/>
    <property type="evidence" value="ECO:0007669"/>
    <property type="project" value="UniProtKB-UniRule"/>
</dbReference>
<dbReference type="Gene3D" id="2.30.30.240">
    <property type="entry name" value="PRC-barrel domain"/>
    <property type="match status" value="1"/>
</dbReference>
<dbReference type="Gene3D" id="2.40.30.60">
    <property type="entry name" value="RimM"/>
    <property type="match status" value="1"/>
</dbReference>
<dbReference type="HAMAP" id="MF_00014">
    <property type="entry name" value="Ribosome_mat_RimM"/>
    <property type="match status" value="1"/>
</dbReference>
<dbReference type="InterPro" id="IPR027275">
    <property type="entry name" value="PRC-brl_dom"/>
</dbReference>
<dbReference type="InterPro" id="IPR011033">
    <property type="entry name" value="PRC_barrel-like_sf"/>
</dbReference>
<dbReference type="InterPro" id="IPR011961">
    <property type="entry name" value="RimM"/>
</dbReference>
<dbReference type="InterPro" id="IPR002676">
    <property type="entry name" value="RimM_N"/>
</dbReference>
<dbReference type="InterPro" id="IPR036976">
    <property type="entry name" value="RimM_N_sf"/>
</dbReference>
<dbReference type="InterPro" id="IPR009000">
    <property type="entry name" value="Transl_B-barrel_sf"/>
</dbReference>
<dbReference type="NCBIfam" id="TIGR02273">
    <property type="entry name" value="16S_RimM"/>
    <property type="match status" value="1"/>
</dbReference>
<dbReference type="PANTHER" id="PTHR33692">
    <property type="entry name" value="RIBOSOME MATURATION FACTOR RIMM"/>
    <property type="match status" value="1"/>
</dbReference>
<dbReference type="PANTHER" id="PTHR33692:SF1">
    <property type="entry name" value="RIBOSOME MATURATION FACTOR RIMM"/>
    <property type="match status" value="1"/>
</dbReference>
<dbReference type="Pfam" id="PF05239">
    <property type="entry name" value="PRC"/>
    <property type="match status" value="1"/>
</dbReference>
<dbReference type="Pfam" id="PF01782">
    <property type="entry name" value="RimM"/>
    <property type="match status" value="1"/>
</dbReference>
<dbReference type="SUPFAM" id="SSF50346">
    <property type="entry name" value="PRC-barrel domain"/>
    <property type="match status" value="1"/>
</dbReference>
<dbReference type="SUPFAM" id="SSF50447">
    <property type="entry name" value="Translation proteins"/>
    <property type="match status" value="1"/>
</dbReference>
<organism>
    <name type="scientific">Sinorhizobium medicae (strain WSM419)</name>
    <name type="common">Ensifer medicae</name>
    <dbReference type="NCBI Taxonomy" id="366394"/>
    <lineage>
        <taxon>Bacteria</taxon>
        <taxon>Pseudomonadati</taxon>
        <taxon>Pseudomonadota</taxon>
        <taxon>Alphaproteobacteria</taxon>
        <taxon>Hyphomicrobiales</taxon>
        <taxon>Rhizobiaceae</taxon>
        <taxon>Sinorhizobium/Ensifer group</taxon>
        <taxon>Sinorhizobium</taxon>
    </lineage>
</organism>
<accession>A6UE44</accession>
<protein>
    <recommendedName>
        <fullName evidence="1">Ribosome maturation factor RimM</fullName>
    </recommendedName>
</protein>
<proteinExistence type="inferred from homology"/>
<gene>
    <name evidence="1" type="primary">rimM</name>
    <name type="ordered locus">Smed_3098</name>
</gene>
<reference key="1">
    <citation type="submission" date="2007-06" db="EMBL/GenBank/DDBJ databases">
        <title>Complete sequence of Sinorhizobium medicae WSM419 chromosome.</title>
        <authorList>
            <consortium name="US DOE Joint Genome Institute"/>
            <person name="Copeland A."/>
            <person name="Lucas S."/>
            <person name="Lapidus A."/>
            <person name="Barry K."/>
            <person name="Glavina del Rio T."/>
            <person name="Dalin E."/>
            <person name="Tice H."/>
            <person name="Pitluck S."/>
            <person name="Chain P."/>
            <person name="Malfatti S."/>
            <person name="Shin M."/>
            <person name="Vergez L."/>
            <person name="Schmutz J."/>
            <person name="Larimer F."/>
            <person name="Land M."/>
            <person name="Hauser L."/>
            <person name="Kyrpides N."/>
            <person name="Mikhailova N."/>
            <person name="Reeve W.G."/>
            <person name="Richardson P."/>
        </authorList>
    </citation>
    <scope>NUCLEOTIDE SEQUENCE [LARGE SCALE GENOMIC DNA]</scope>
    <source>
        <strain>WSM419</strain>
    </source>
</reference>
<comment type="function">
    <text evidence="1">An accessory protein needed during the final step in the assembly of 30S ribosomal subunit, possibly for assembly of the head region. Essential for efficient processing of 16S rRNA. May be needed both before and after RbfA during the maturation of 16S rRNA. It has affinity for free ribosomal 30S subunits but not for 70S ribosomes.</text>
</comment>
<comment type="subunit">
    <text evidence="1">Binds ribosomal protein uS19.</text>
</comment>
<comment type="subcellular location">
    <subcellularLocation>
        <location evidence="1">Cytoplasm</location>
    </subcellularLocation>
</comment>
<comment type="domain">
    <text evidence="1">The PRC barrel domain binds ribosomal protein uS19.</text>
</comment>
<comment type="similarity">
    <text evidence="1">Belongs to the RimM family.</text>
</comment>
<comment type="sequence caution" evidence="2">
    <conflict type="erroneous initiation">
        <sequence resource="EMBL-CDS" id="ABR61924"/>
    </conflict>
</comment>
<sequence length="187" mass="20400">MTQLKNPVLMATIGAAQGLRGEVRVKSFTDDPTALGDYGNLHSEDGRVFEVLEIREAKNVVVVRFRGVNDRTAAEALNGLELFIERDNLPDDDLDEDEFFYADLEGMEAVDRTGKSYGSVTGVFDFGAGDLLELKGPGLRPVLIPFTEWSVLEIDLEAGKLVIDPTAAGLVDDEKSGPGKPFPTKRK</sequence>